<accession>C8VJW0</accession>
<feature type="chain" id="PRO_0000443341" description="Nicotinate catabolism cluster-specific transcription factor">
    <location>
        <begin position="1"/>
        <end position="865"/>
    </location>
</feature>
<feature type="zinc finger region" description="C2H2-type 1" evidence="1">
    <location>
        <begin position="8"/>
        <end position="32"/>
    </location>
</feature>
<feature type="zinc finger region" description="C2H2-type 2" evidence="1">
    <location>
        <begin position="41"/>
        <end position="63"/>
    </location>
</feature>
<feature type="region of interest" description="Disordered" evidence="2">
    <location>
        <begin position="74"/>
        <end position="168"/>
    </location>
</feature>
<feature type="short sequence motif" description="Nuclear localization signal(NLS)" evidence="5">
    <location>
        <begin position="77"/>
        <end position="87"/>
    </location>
</feature>
<feature type="short sequence motif" description="Nuclear export signal (NES)" evidence="5">
    <location>
        <begin position="285"/>
        <end position="289"/>
    </location>
</feature>
<feature type="compositionally biased region" description="Basic and acidic residues" evidence="2">
    <location>
        <begin position="78"/>
        <end position="89"/>
    </location>
</feature>
<feature type="compositionally biased region" description="Basic residues" evidence="2">
    <location>
        <begin position="96"/>
        <end position="105"/>
    </location>
</feature>
<feature type="compositionally biased region" description="Low complexity" evidence="2">
    <location>
        <begin position="108"/>
        <end position="132"/>
    </location>
</feature>
<feature type="mutagenesis site" description="Leads to constitutive activator activity." evidence="3">
    <original>P</original>
    <variation>A</variation>
    <variation>L</variation>
    <location>
        <position position="219"/>
    </location>
</feature>
<feature type="mutagenesis site" description="Leads to constitutive activator activity." evidence="3">
    <original>Y</original>
    <variation>D</variation>
    <variation>L</variation>
    <variation>S</variation>
    <location>
        <position position="226"/>
    </location>
</feature>
<feature type="mutagenesis site" description="Leads to constitutive activator activity." evidence="3">
    <original>N</original>
    <variation>D</variation>
    <location>
        <position position="227"/>
    </location>
</feature>
<feature type="mutagenesis site" description="Leads to constitutive activator activity." evidence="3">
    <original>W</original>
    <variation>R</variation>
    <variation>S</variation>
    <location>
        <position position="228"/>
    </location>
</feature>
<feature type="mutagenesis site" description="Leads to constitutive activator activity." evidence="3">
    <original>F</original>
    <variation>I</variation>
    <variation>S</variation>
    <location>
        <position position="230"/>
    </location>
</feature>
<feature type="mutagenesis site" description="Leads to constitutive activator activity; when associated with Pro-238." evidence="3">
    <original>D</original>
    <variation>Y</variation>
    <location>
        <position position="237"/>
    </location>
</feature>
<feature type="mutagenesis site" description="Leads to constitutive activator activity; when associated with Tyr-237." evidence="3">
    <original>A</original>
    <variation>P</variation>
    <location>
        <position position="238"/>
    </location>
</feature>
<feature type="mutagenesis site" description="Leads to constitutive activator activity." evidence="3">
    <original>F</original>
    <variation>S</variation>
    <location>
        <position position="239"/>
    </location>
</feature>
<feature type="mutagenesis site" description="Leads to constitutive activator activity." evidence="3">
    <original>F</original>
    <variation>S</variation>
    <location>
        <position position="565"/>
    </location>
</feature>
<feature type="mutagenesis site" description="Leads to constitutive activator activity." evidence="3">
    <original>K</original>
    <variation>N</variation>
    <variation>E</variation>
    <variation>T</variation>
    <location>
        <position position="603"/>
    </location>
</feature>
<feature type="mutagenesis site" description="Leads to constitutive activator activity." evidence="3">
    <original>T</original>
    <variation>P</variation>
    <variation>S</variation>
    <location>
        <position position="607"/>
    </location>
</feature>
<feature type="mutagenesis site" description="Leads to constitutive activator activity." evidence="3">
    <original>R</original>
    <variation>C</variation>
    <location>
        <position position="639"/>
    </location>
</feature>
<evidence type="ECO:0000255" key="1">
    <source>
        <dbReference type="PROSITE-ProRule" id="PRU00042"/>
    </source>
</evidence>
<evidence type="ECO:0000256" key="2">
    <source>
        <dbReference type="SAM" id="MobiDB-lite"/>
    </source>
</evidence>
<evidence type="ECO:0000269" key="3">
    <source>
    </source>
</evidence>
<evidence type="ECO:0000269" key="4">
    <source>
    </source>
</evidence>
<evidence type="ECO:0000303" key="5">
    <source>
    </source>
</evidence>
<evidence type="ECO:0000303" key="6">
    <source>
    </source>
</evidence>
<evidence type="ECO:0000305" key="7">
    <source>
    </source>
</evidence>
<gene>
    <name evidence="5" type="primary">hxnR</name>
    <name evidence="6" type="synonym">aplA</name>
    <name type="ORF">ANIA_11197</name>
</gene>
<comment type="function">
    <text evidence="3 4">Transcription factor that specifically regulates the expression of the hxn gene cluster that mediates the degradation of nicotinate and related metabolites (PubMed:29212709, PubMed:4581274).</text>
</comment>
<comment type="subcellular location">
    <subcellularLocation>
        <location evidence="7">Nucleus</location>
    </subcellularLocation>
</comment>
<comment type="induction">
    <text evidence="3">Expression is induced by nicotinate and 6-OH nicotinate and is subject to nitrogen metabolite repression mediated by the GATA factor areA (PubMed:29212709).</text>
</comment>
<comment type="disruption phenotype">
    <text evidence="3">Leads to the inability to use nicotinate, 6-OH nicotinic acid, and 2,5-dihydroxypyridine as sole nitrogen sources (PubMed:29212709).</text>
</comment>
<dbReference type="EMBL" id="BN001306">
    <property type="protein sequence ID" value="CBF82382.1"/>
    <property type="molecule type" value="Genomic_DNA"/>
</dbReference>
<dbReference type="SMR" id="C8VJW0"/>
<dbReference type="STRING" id="227321.C8VJW0"/>
<dbReference type="EnsemblFungi" id="CBF82382">
    <property type="protein sequence ID" value="CBF82382"/>
    <property type="gene ID" value="ANIA_11197"/>
</dbReference>
<dbReference type="VEuPathDB" id="FungiDB:AN11197"/>
<dbReference type="eggNOG" id="KOG1721">
    <property type="taxonomic scope" value="Eukaryota"/>
</dbReference>
<dbReference type="HOGENOM" id="CLU_005733_1_1_1"/>
<dbReference type="InParanoid" id="C8VJW0"/>
<dbReference type="OMA" id="IRRSNCC"/>
<dbReference type="OrthoDB" id="1405595at2759"/>
<dbReference type="Proteomes" id="UP000000560">
    <property type="component" value="Chromosome VI"/>
</dbReference>
<dbReference type="GO" id="GO:0000785">
    <property type="term" value="C:chromatin"/>
    <property type="evidence" value="ECO:0000318"/>
    <property type="project" value="GO_Central"/>
</dbReference>
<dbReference type="GO" id="GO:0005634">
    <property type="term" value="C:nucleus"/>
    <property type="evidence" value="ECO:0007669"/>
    <property type="project" value="UniProtKB-SubCell"/>
</dbReference>
<dbReference type="GO" id="GO:0000981">
    <property type="term" value="F:DNA-binding transcription factor activity, RNA polymerase II-specific"/>
    <property type="evidence" value="ECO:0000318"/>
    <property type="project" value="GO_Central"/>
</dbReference>
<dbReference type="GO" id="GO:0000978">
    <property type="term" value="F:RNA polymerase II cis-regulatory region sequence-specific DNA binding"/>
    <property type="evidence" value="ECO:0000318"/>
    <property type="project" value="GO_Central"/>
</dbReference>
<dbReference type="GO" id="GO:0008270">
    <property type="term" value="F:zinc ion binding"/>
    <property type="evidence" value="ECO:0007669"/>
    <property type="project" value="UniProtKB-KW"/>
</dbReference>
<dbReference type="GO" id="GO:0006351">
    <property type="term" value="P:DNA-templated transcription"/>
    <property type="evidence" value="ECO:0007669"/>
    <property type="project" value="InterPro"/>
</dbReference>
<dbReference type="GO" id="GO:0006357">
    <property type="term" value="P:regulation of transcription by RNA polymerase II"/>
    <property type="evidence" value="ECO:0000318"/>
    <property type="project" value="GO_Central"/>
</dbReference>
<dbReference type="CDD" id="cd12148">
    <property type="entry name" value="fungal_TF_MHR"/>
    <property type="match status" value="1"/>
</dbReference>
<dbReference type="Gene3D" id="3.30.160.60">
    <property type="entry name" value="Classic Zinc Finger"/>
    <property type="match status" value="1"/>
</dbReference>
<dbReference type="InterPro" id="IPR007219">
    <property type="entry name" value="Transcription_factor_dom_fun"/>
</dbReference>
<dbReference type="InterPro" id="IPR051059">
    <property type="entry name" value="VerF-like"/>
</dbReference>
<dbReference type="InterPro" id="IPR036236">
    <property type="entry name" value="Znf_C2H2_sf"/>
</dbReference>
<dbReference type="InterPro" id="IPR013087">
    <property type="entry name" value="Znf_C2H2_type"/>
</dbReference>
<dbReference type="PANTHER" id="PTHR40626">
    <property type="entry name" value="MIP31509P"/>
    <property type="match status" value="1"/>
</dbReference>
<dbReference type="PANTHER" id="PTHR40626:SF18">
    <property type="entry name" value="NICOTINATE CATABOLISM CLUSTER-SPECIFIC TRANSCRIPTION FACTOR"/>
    <property type="match status" value="1"/>
</dbReference>
<dbReference type="Pfam" id="PF04082">
    <property type="entry name" value="Fungal_trans"/>
    <property type="match status" value="1"/>
</dbReference>
<dbReference type="SMART" id="SM00355">
    <property type="entry name" value="ZnF_C2H2"/>
    <property type="match status" value="2"/>
</dbReference>
<dbReference type="SUPFAM" id="SSF57667">
    <property type="entry name" value="beta-beta-alpha zinc fingers"/>
    <property type="match status" value="1"/>
</dbReference>
<dbReference type="PROSITE" id="PS00028">
    <property type="entry name" value="ZINC_FINGER_C2H2_1"/>
    <property type="match status" value="2"/>
</dbReference>
<dbReference type="PROSITE" id="PS50157">
    <property type="entry name" value="ZINC_FINGER_C2H2_2"/>
    <property type="match status" value="2"/>
</dbReference>
<organism>
    <name type="scientific">Emericella nidulans (strain FGSC A4 / ATCC 38163 / CBS 112.46 / NRRL 194 / M139)</name>
    <name type="common">Aspergillus nidulans</name>
    <dbReference type="NCBI Taxonomy" id="227321"/>
    <lineage>
        <taxon>Eukaryota</taxon>
        <taxon>Fungi</taxon>
        <taxon>Dikarya</taxon>
        <taxon>Ascomycota</taxon>
        <taxon>Pezizomycotina</taxon>
        <taxon>Eurotiomycetes</taxon>
        <taxon>Eurotiomycetidae</taxon>
        <taxon>Eurotiales</taxon>
        <taxon>Aspergillaceae</taxon>
        <taxon>Aspergillus</taxon>
        <taxon>Aspergillus subgen. Nidulantes</taxon>
    </lineage>
</organism>
<proteinExistence type="evidence at protein level"/>
<keyword id="KW-0479">Metal-binding</keyword>
<keyword id="KW-0539">Nucleus</keyword>
<keyword id="KW-1185">Reference proteome</keyword>
<keyword id="KW-0677">Repeat</keyword>
<keyword id="KW-0862">Zinc</keyword>
<keyword id="KW-0863">Zinc-finger</keyword>
<reference key="1">
    <citation type="journal article" date="2005" name="Nature">
        <title>Sequencing of Aspergillus nidulans and comparative analysis with A. fumigatus and A. oryzae.</title>
        <authorList>
            <person name="Galagan J.E."/>
            <person name="Calvo S.E."/>
            <person name="Cuomo C."/>
            <person name="Ma L.-J."/>
            <person name="Wortman J.R."/>
            <person name="Batzoglou S."/>
            <person name="Lee S.-I."/>
            <person name="Bastuerkmen M."/>
            <person name="Spevak C.C."/>
            <person name="Clutterbuck J."/>
            <person name="Kapitonov V."/>
            <person name="Jurka J."/>
            <person name="Scazzocchio C."/>
            <person name="Farman M.L."/>
            <person name="Butler J."/>
            <person name="Purcell S."/>
            <person name="Harris S."/>
            <person name="Braus G.H."/>
            <person name="Draht O."/>
            <person name="Busch S."/>
            <person name="D'Enfert C."/>
            <person name="Bouchier C."/>
            <person name="Goldman G.H."/>
            <person name="Bell-Pedersen D."/>
            <person name="Griffiths-Jones S."/>
            <person name="Doonan J.H."/>
            <person name="Yu J."/>
            <person name="Vienken K."/>
            <person name="Pain A."/>
            <person name="Freitag M."/>
            <person name="Selker E.U."/>
            <person name="Archer D.B."/>
            <person name="Penalva M.A."/>
            <person name="Oakley B.R."/>
            <person name="Momany M."/>
            <person name="Tanaka T."/>
            <person name="Kumagai T."/>
            <person name="Asai K."/>
            <person name="Machida M."/>
            <person name="Nierman W.C."/>
            <person name="Denning D.W."/>
            <person name="Caddick M.X."/>
            <person name="Hynes M."/>
            <person name="Paoletti M."/>
            <person name="Fischer R."/>
            <person name="Miller B.L."/>
            <person name="Dyer P.S."/>
            <person name="Sachs M.S."/>
            <person name="Osmani S.A."/>
            <person name="Birren B.W."/>
        </authorList>
    </citation>
    <scope>NUCLEOTIDE SEQUENCE [LARGE SCALE GENOMIC DNA]</scope>
    <source>
        <strain>FGSC A4 / ATCC 38163 / CBS 112.46 / NRRL 194 / M139</strain>
    </source>
</reference>
<reference key="2">
    <citation type="journal article" date="2009" name="Fungal Genet. Biol.">
        <title>The 2008 update of the Aspergillus nidulans genome annotation: a community effort.</title>
        <authorList>
            <person name="Wortman J.R."/>
            <person name="Gilsenan J.M."/>
            <person name="Joardar V."/>
            <person name="Deegan J."/>
            <person name="Clutterbuck J."/>
            <person name="Andersen M.R."/>
            <person name="Archer D."/>
            <person name="Bencina M."/>
            <person name="Braus G."/>
            <person name="Coutinho P."/>
            <person name="von Dohren H."/>
            <person name="Doonan J."/>
            <person name="Driessen A.J."/>
            <person name="Durek P."/>
            <person name="Espeso E."/>
            <person name="Fekete E."/>
            <person name="Flipphi M."/>
            <person name="Estrada C.G."/>
            <person name="Geysens S."/>
            <person name="Goldman G."/>
            <person name="de Groot P.W."/>
            <person name="Hansen K."/>
            <person name="Harris S.D."/>
            <person name="Heinekamp T."/>
            <person name="Helmstaedt K."/>
            <person name="Henrissat B."/>
            <person name="Hofmann G."/>
            <person name="Homan T."/>
            <person name="Horio T."/>
            <person name="Horiuchi H."/>
            <person name="James S."/>
            <person name="Jones M."/>
            <person name="Karaffa L."/>
            <person name="Karanyi Z."/>
            <person name="Kato M."/>
            <person name="Keller N."/>
            <person name="Kelly D.E."/>
            <person name="Kiel J.A."/>
            <person name="Kim J.M."/>
            <person name="van der Klei I.J."/>
            <person name="Klis F.M."/>
            <person name="Kovalchuk A."/>
            <person name="Krasevec N."/>
            <person name="Kubicek C.P."/>
            <person name="Liu B."/>
            <person name="Maccabe A."/>
            <person name="Meyer V."/>
            <person name="Mirabito P."/>
            <person name="Miskei M."/>
            <person name="Mos M."/>
            <person name="Mullins J."/>
            <person name="Nelson D.R."/>
            <person name="Nielsen J."/>
            <person name="Oakley B.R."/>
            <person name="Osmani S.A."/>
            <person name="Pakula T."/>
            <person name="Paszewski A."/>
            <person name="Paulsen I."/>
            <person name="Pilsyk S."/>
            <person name="Pocsi I."/>
            <person name="Punt P.J."/>
            <person name="Ram A.F."/>
            <person name="Ren Q."/>
            <person name="Robellet X."/>
            <person name="Robson G."/>
            <person name="Seiboth B."/>
            <person name="van Solingen P."/>
            <person name="Specht T."/>
            <person name="Sun J."/>
            <person name="Taheri-Talesh N."/>
            <person name="Takeshita N."/>
            <person name="Ussery D."/>
            <person name="vanKuyk P.A."/>
            <person name="Visser H."/>
            <person name="van de Vondervoort P.J."/>
            <person name="de Vries R.P."/>
            <person name="Walton J."/>
            <person name="Xiang X."/>
            <person name="Xiong Y."/>
            <person name="Zeng A.P."/>
            <person name="Brandt B.W."/>
            <person name="Cornell M.J."/>
            <person name="van den Hondel C.A."/>
            <person name="Visser J."/>
            <person name="Oliver S.G."/>
            <person name="Turner G."/>
        </authorList>
    </citation>
    <scope>GENOME REANNOTATION</scope>
    <source>
        <strain>FGSC A4 / ATCC 38163 / CBS 112.46 / NRRL 194 / M139</strain>
    </source>
</reference>
<reference key="3">
    <citation type="journal article" date="1973" name="Eur. J. Biochem.">
        <title>The genetic control of molybdoflavoproteins in Aspergillus nidulans. Allopurinol-resistant mutants constitutive for xanthine-dehydrogenase.</title>
        <authorList>
            <person name="Scazzocchio C."/>
            <person name="Holl F.B."/>
            <person name="Foguelman A.I."/>
        </authorList>
    </citation>
    <scope>FUNCTION</scope>
</reference>
<reference key="4">
    <citation type="journal article" date="2017" name="Open Biol.">
        <title>A eukaryotic nicotinate-inducible gene cluster: convergent evolution in fungi and bacteria.</title>
        <authorList>
            <person name="Amon J."/>
            <person name="Fernandez-Martin R."/>
            <person name="Bokor E."/>
            <person name="Cultrone A."/>
            <person name="Kelly J.M."/>
            <person name="Flipphi M."/>
            <person name="Scazzocchio C."/>
            <person name="Hamari Z."/>
        </authorList>
    </citation>
    <scope>IDENTIFICATION</scope>
    <scope>INDUCTION</scope>
    <scope>FUNCTION</scope>
    <scope>DISRUPTION PHENOTYPE</scope>
    <scope>MUTAGENESIS OF PRO-219; TYR-226; ASN-227; TRP-228; PHE-230; ASP-237; ALA-238; PHE-239; PHE-565; LYS-603; THR-607 AND ARG-639</scope>
</reference>
<protein>
    <recommendedName>
        <fullName evidence="5">Nicotinate catabolism cluster-specific transcription factor</fullName>
    </recommendedName>
</protein>
<sequence>MKAKMKKHACTYPGCSKAFTRAEHLRRHSLNHETISNSQGYTCQRCMTHFSRADLLSRHLDRHAKKDAEAGGFGKGVLETRKRMRRAEDGSIVLRPPKRPSRHQQKTGPPVGAPLSSSGSVSAGSGRSSRSPDVSLHAAQAPVSPPRSASDPVSVSGVSIDDDGTDPDPMLAPMMPGGPFEPYVEPIPGQFDAADGSWGGFDALGDGMMLDTATDFNLPFAATGNYNWLFDVSSLDDAFHHLELPLGPDLVPFANSHGNYASVNTMELSGAGAENVQDSMLNLDLDIDLNGLPAGFVHDQGPDGSSASVLLQAASFVERGNINGSDPKRDFPDLDWMAGAPPIESTVPLRPQLSEDARRGILTLIAQSPPVDIHGQPLNLDSPLLSLSALQSYSDLFFSRFNTTYPLIHSATFDPNKTEPVFLASILSMGATYSSREAHQLAVGIHDGLRNQLFCHGAFSPQPDELWVLQAMLLIDCFGKMRAGPKQRERAQLFHCVLIKLIRRSTCCSIRADTHSDPGLGGLELEDAWKRAMDAEQRKRLAFQCFMWDTEHSVLFSQSLCMSAFEIRSSLPCSPAAWEAHTAEEWSRHASRDTEHAFLPVLKGYITPGSVSRPRDLNRFSRMVVLHGLMSISADLKRRDQTTLRAETPERVGAWTPRMGRAYDLWKADFDADCLNMKLGPVQVSADETRRFTSLKAAAMALYRAASLALHVEVLDLQIAAGASHILGRVVKQHDRERSRVMLSRWLSGPSPAATTASRHAAALLQDAVLSLHDWDQTDAFHFPWCLYLATLTVWAFHAREGCVPKPTDLSSLIVAMTTSNAADLEGLAGQYDTRPLIRAMAQQLATVRWAVVHDAMKVLLNLGV</sequence>
<name>HXNR_EMENI</name>